<comment type="function">
    <text evidence="1">Cell wall formation. Catalyzes the transfer of a GlcNAc subunit on undecaprenyl-pyrophosphoryl-MurNAc-pentapeptide (lipid intermediate I) to form undecaprenyl-pyrophosphoryl-MurNAc-(pentapeptide)GlcNAc (lipid intermediate II).</text>
</comment>
<comment type="catalytic activity">
    <reaction evidence="1">
        <text>di-trans,octa-cis-undecaprenyl diphospho-N-acetyl-alpha-D-muramoyl-L-alanyl-D-glutamyl-meso-2,6-diaminopimeloyl-D-alanyl-D-alanine + UDP-N-acetyl-alpha-D-glucosamine = di-trans,octa-cis-undecaprenyl diphospho-[N-acetyl-alpha-D-glucosaminyl-(1-&gt;4)]-N-acetyl-alpha-D-muramoyl-L-alanyl-D-glutamyl-meso-2,6-diaminopimeloyl-D-alanyl-D-alanine + UDP + H(+)</text>
        <dbReference type="Rhea" id="RHEA:31227"/>
        <dbReference type="ChEBI" id="CHEBI:15378"/>
        <dbReference type="ChEBI" id="CHEBI:57705"/>
        <dbReference type="ChEBI" id="CHEBI:58223"/>
        <dbReference type="ChEBI" id="CHEBI:61387"/>
        <dbReference type="ChEBI" id="CHEBI:61388"/>
        <dbReference type="EC" id="2.4.1.227"/>
    </reaction>
</comment>
<comment type="pathway">
    <text evidence="1">Cell wall biogenesis; peptidoglycan biosynthesis.</text>
</comment>
<comment type="subcellular location">
    <subcellularLocation>
        <location evidence="1">Cell membrane</location>
        <topology evidence="1">Peripheral membrane protein</topology>
        <orientation evidence="1">Cytoplasmic side</orientation>
    </subcellularLocation>
</comment>
<comment type="similarity">
    <text evidence="1">Belongs to the glycosyltransferase 28 family. MurG subfamily.</text>
</comment>
<comment type="sequence caution" evidence="2">
    <conflict type="erroneous initiation">
        <sequence resource="EMBL-CDS" id="AAU16597"/>
    </conflict>
</comment>
<gene>
    <name evidence="1" type="primary">murG1</name>
    <name type="ordered locus">BCE33L3669</name>
</gene>
<protein>
    <recommendedName>
        <fullName evidence="1">UDP-N-acetylglucosamine--N-acetylmuramyl-(pentapeptide) pyrophosphoryl-undecaprenol N-acetylglucosamine transferase 1</fullName>
        <ecNumber evidence="1">2.4.1.227</ecNumber>
    </recommendedName>
    <alternativeName>
        <fullName evidence="1">Undecaprenyl-PP-MurNAc-pentapeptide-UDPGlcNAc GlcNAc transferase 1</fullName>
    </alternativeName>
</protein>
<proteinExistence type="inferred from homology"/>
<dbReference type="EC" id="2.4.1.227" evidence="1"/>
<dbReference type="EMBL" id="CP000001">
    <property type="protein sequence ID" value="AAU16597.1"/>
    <property type="status" value="ALT_INIT"/>
    <property type="molecule type" value="Genomic_DNA"/>
</dbReference>
<dbReference type="SMR" id="Q636B6"/>
<dbReference type="CAZy" id="GT28">
    <property type="family name" value="Glycosyltransferase Family 28"/>
</dbReference>
<dbReference type="KEGG" id="bcz:BCE33L3669"/>
<dbReference type="PATRIC" id="fig|288681.22.peg.1742"/>
<dbReference type="UniPathway" id="UPA00219"/>
<dbReference type="Proteomes" id="UP000002612">
    <property type="component" value="Chromosome"/>
</dbReference>
<dbReference type="GO" id="GO:0005886">
    <property type="term" value="C:plasma membrane"/>
    <property type="evidence" value="ECO:0007669"/>
    <property type="project" value="UniProtKB-SubCell"/>
</dbReference>
<dbReference type="GO" id="GO:0051991">
    <property type="term" value="F:UDP-N-acetyl-D-glucosamine:N-acetylmuramoyl-L-alanyl-D-glutamyl-meso-2,6-diaminopimelyl-D-alanyl-D-alanine-diphosphoundecaprenol 4-beta-N-acetylglucosaminlytransferase activity"/>
    <property type="evidence" value="ECO:0007669"/>
    <property type="project" value="RHEA"/>
</dbReference>
<dbReference type="GO" id="GO:0050511">
    <property type="term" value="F:undecaprenyldiphospho-muramoylpentapeptide beta-N-acetylglucosaminyltransferase activity"/>
    <property type="evidence" value="ECO:0007669"/>
    <property type="project" value="UniProtKB-UniRule"/>
</dbReference>
<dbReference type="GO" id="GO:0005975">
    <property type="term" value="P:carbohydrate metabolic process"/>
    <property type="evidence" value="ECO:0007669"/>
    <property type="project" value="InterPro"/>
</dbReference>
<dbReference type="GO" id="GO:0051301">
    <property type="term" value="P:cell division"/>
    <property type="evidence" value="ECO:0007669"/>
    <property type="project" value="UniProtKB-KW"/>
</dbReference>
<dbReference type="GO" id="GO:0071555">
    <property type="term" value="P:cell wall organization"/>
    <property type="evidence" value="ECO:0007669"/>
    <property type="project" value="UniProtKB-KW"/>
</dbReference>
<dbReference type="GO" id="GO:0030259">
    <property type="term" value="P:lipid glycosylation"/>
    <property type="evidence" value="ECO:0007669"/>
    <property type="project" value="UniProtKB-UniRule"/>
</dbReference>
<dbReference type="GO" id="GO:0009252">
    <property type="term" value="P:peptidoglycan biosynthetic process"/>
    <property type="evidence" value="ECO:0007669"/>
    <property type="project" value="UniProtKB-UniRule"/>
</dbReference>
<dbReference type="GO" id="GO:0008360">
    <property type="term" value="P:regulation of cell shape"/>
    <property type="evidence" value="ECO:0007669"/>
    <property type="project" value="UniProtKB-KW"/>
</dbReference>
<dbReference type="CDD" id="cd03785">
    <property type="entry name" value="GT28_MurG"/>
    <property type="match status" value="1"/>
</dbReference>
<dbReference type="Gene3D" id="3.40.50.2000">
    <property type="entry name" value="Glycogen Phosphorylase B"/>
    <property type="match status" value="2"/>
</dbReference>
<dbReference type="HAMAP" id="MF_00033">
    <property type="entry name" value="MurG"/>
    <property type="match status" value="1"/>
</dbReference>
<dbReference type="InterPro" id="IPR006009">
    <property type="entry name" value="GlcNAc_MurG"/>
</dbReference>
<dbReference type="InterPro" id="IPR007235">
    <property type="entry name" value="Glyco_trans_28_C"/>
</dbReference>
<dbReference type="InterPro" id="IPR004276">
    <property type="entry name" value="GlycoTrans_28_N"/>
</dbReference>
<dbReference type="NCBIfam" id="TIGR01133">
    <property type="entry name" value="murG"/>
    <property type="match status" value="1"/>
</dbReference>
<dbReference type="PANTHER" id="PTHR21015:SF22">
    <property type="entry name" value="GLYCOSYLTRANSFERASE"/>
    <property type="match status" value="1"/>
</dbReference>
<dbReference type="PANTHER" id="PTHR21015">
    <property type="entry name" value="UDP-N-ACETYLGLUCOSAMINE--N-ACETYLMURAMYL-(PENTAPEPTIDE) PYROPHOSPHORYL-UNDECAPRENOL N-ACETYLGLUCOSAMINE TRANSFERASE 1"/>
    <property type="match status" value="1"/>
</dbReference>
<dbReference type="Pfam" id="PF04101">
    <property type="entry name" value="Glyco_tran_28_C"/>
    <property type="match status" value="1"/>
</dbReference>
<dbReference type="Pfam" id="PF03033">
    <property type="entry name" value="Glyco_transf_28"/>
    <property type="match status" value="1"/>
</dbReference>
<dbReference type="SUPFAM" id="SSF53756">
    <property type="entry name" value="UDP-Glycosyltransferase/glycogen phosphorylase"/>
    <property type="match status" value="1"/>
</dbReference>
<name>MURG1_BACCZ</name>
<reference key="1">
    <citation type="journal article" date="2006" name="J. Bacteriol.">
        <title>Pathogenomic sequence analysis of Bacillus cereus and Bacillus thuringiensis isolates closely related to Bacillus anthracis.</title>
        <authorList>
            <person name="Han C.S."/>
            <person name="Xie G."/>
            <person name="Challacombe J.F."/>
            <person name="Altherr M.R."/>
            <person name="Bhotika S.S."/>
            <person name="Bruce D."/>
            <person name="Campbell C.S."/>
            <person name="Campbell M.L."/>
            <person name="Chen J."/>
            <person name="Chertkov O."/>
            <person name="Cleland C."/>
            <person name="Dimitrijevic M."/>
            <person name="Doggett N.A."/>
            <person name="Fawcett J.J."/>
            <person name="Glavina T."/>
            <person name="Goodwin L.A."/>
            <person name="Hill K.K."/>
            <person name="Hitchcock P."/>
            <person name="Jackson P.J."/>
            <person name="Keim P."/>
            <person name="Kewalramani A.R."/>
            <person name="Longmire J."/>
            <person name="Lucas S."/>
            <person name="Malfatti S."/>
            <person name="McMurry K."/>
            <person name="Meincke L.J."/>
            <person name="Misra M."/>
            <person name="Moseman B.L."/>
            <person name="Mundt M."/>
            <person name="Munk A.C."/>
            <person name="Okinaka R.T."/>
            <person name="Parson-Quintana B."/>
            <person name="Reilly L.P."/>
            <person name="Richardson P."/>
            <person name="Robinson D.L."/>
            <person name="Rubin E."/>
            <person name="Saunders E."/>
            <person name="Tapia R."/>
            <person name="Tesmer J.G."/>
            <person name="Thayer N."/>
            <person name="Thompson L.S."/>
            <person name="Tice H."/>
            <person name="Ticknor L.O."/>
            <person name="Wills P.L."/>
            <person name="Brettin T.S."/>
            <person name="Gilna P."/>
        </authorList>
    </citation>
    <scope>NUCLEOTIDE SEQUENCE [LARGE SCALE GENOMIC DNA]</scope>
    <source>
        <strain>ZK / E33L</strain>
    </source>
</reference>
<keyword id="KW-0131">Cell cycle</keyword>
<keyword id="KW-0132">Cell division</keyword>
<keyword id="KW-1003">Cell membrane</keyword>
<keyword id="KW-0133">Cell shape</keyword>
<keyword id="KW-0961">Cell wall biogenesis/degradation</keyword>
<keyword id="KW-0328">Glycosyltransferase</keyword>
<keyword id="KW-0472">Membrane</keyword>
<keyword id="KW-0573">Peptidoglycan synthesis</keyword>
<keyword id="KW-0808">Transferase</keyword>
<organism>
    <name type="scientific">Bacillus cereus (strain ZK / E33L)</name>
    <dbReference type="NCBI Taxonomy" id="288681"/>
    <lineage>
        <taxon>Bacteria</taxon>
        <taxon>Bacillati</taxon>
        <taxon>Bacillota</taxon>
        <taxon>Bacilli</taxon>
        <taxon>Bacillales</taxon>
        <taxon>Bacillaceae</taxon>
        <taxon>Bacillus</taxon>
        <taxon>Bacillus cereus group</taxon>
    </lineage>
</organism>
<accession>Q636B6</accession>
<feature type="chain" id="PRO_0000315065" description="UDP-N-acetylglucosamine--N-acetylmuramyl-(pentapeptide) pyrophosphoryl-undecaprenol N-acetylglucosamine transferase 1">
    <location>
        <begin position="1"/>
        <end position="364"/>
    </location>
</feature>
<feature type="binding site" evidence="1">
    <location>
        <begin position="10"/>
        <end position="12"/>
    </location>
    <ligand>
        <name>UDP-N-acetyl-alpha-D-glucosamine</name>
        <dbReference type="ChEBI" id="CHEBI:57705"/>
    </ligand>
</feature>
<feature type="binding site" evidence="1">
    <location>
        <position position="124"/>
    </location>
    <ligand>
        <name>UDP-N-acetyl-alpha-D-glucosamine</name>
        <dbReference type="ChEBI" id="CHEBI:57705"/>
    </ligand>
</feature>
<feature type="binding site" evidence="1">
    <location>
        <position position="195"/>
    </location>
    <ligand>
        <name>UDP-N-acetyl-alpha-D-glucosamine</name>
        <dbReference type="ChEBI" id="CHEBI:57705"/>
    </ligand>
</feature>
<feature type="binding site" evidence="1">
    <location>
        <position position="250"/>
    </location>
    <ligand>
        <name>UDP-N-acetyl-alpha-D-glucosamine</name>
        <dbReference type="ChEBI" id="CHEBI:57705"/>
    </ligand>
</feature>
<feature type="binding site" evidence="1">
    <location>
        <position position="295"/>
    </location>
    <ligand>
        <name>UDP-N-acetyl-alpha-D-glucosamine</name>
        <dbReference type="ChEBI" id="CHEBI:57705"/>
    </ligand>
</feature>
<sequence length="364" mass="39600">MRVLVSGGGTGGHIYPALALIREIKKLNPEARFLYIGTENGLESTIVPKAGIPFQSIVISGFKRKISLDNVKTVMRFLKGVQDSKRYIRRFNPDIVIGTGGYVCGPVVYAAAKLGIPTIVHEQNSVPGVTNKFLSRYVDKVAVCFEAAAEHFPQSKVVMTGNPRASEVMDQNGMKGKRSVGLSLPKKSVLIFGGSRGARPINDAFVEAIEQFGNKSYEILYVTGEVHYDKVMEAVKQKGNPNNVIIKPFIHNMPEVLTGVDLVVSRAGATTLAELTALGKPSVLIPSPYVTNNHQEKNARSVVDKGAAKMLLEKDLTAETLIRDIDEILLDAQTLQNMKLAAGQLGIPDAANKLYEVMNKLVKK</sequence>
<evidence type="ECO:0000255" key="1">
    <source>
        <dbReference type="HAMAP-Rule" id="MF_00033"/>
    </source>
</evidence>
<evidence type="ECO:0000305" key="2"/>